<organism>
    <name type="scientific">Schizosaccharomyces pombe (strain 972 / ATCC 24843)</name>
    <name type="common">Fission yeast</name>
    <dbReference type="NCBI Taxonomy" id="284812"/>
    <lineage>
        <taxon>Eukaryota</taxon>
        <taxon>Fungi</taxon>
        <taxon>Dikarya</taxon>
        <taxon>Ascomycota</taxon>
        <taxon>Taphrinomycotina</taxon>
        <taxon>Schizosaccharomycetes</taxon>
        <taxon>Schizosaccharomycetales</taxon>
        <taxon>Schizosaccharomycetaceae</taxon>
        <taxon>Schizosaccharomyces</taxon>
    </lineage>
</organism>
<accession>Q9HDU5</accession>
<name>GAL7_SCHPO</name>
<reference key="1">
    <citation type="journal article" date="2002" name="Nature">
        <title>The genome sequence of Schizosaccharomyces pombe.</title>
        <authorList>
            <person name="Wood V."/>
            <person name="Gwilliam R."/>
            <person name="Rajandream M.A."/>
            <person name="Lyne M.H."/>
            <person name="Lyne R."/>
            <person name="Stewart A."/>
            <person name="Sgouros J.G."/>
            <person name="Peat N."/>
            <person name="Hayles J."/>
            <person name="Baker S.G."/>
            <person name="Basham D."/>
            <person name="Bowman S."/>
            <person name="Brooks K."/>
            <person name="Brown D."/>
            <person name="Brown S."/>
            <person name="Chillingworth T."/>
            <person name="Churcher C.M."/>
            <person name="Collins M."/>
            <person name="Connor R."/>
            <person name="Cronin A."/>
            <person name="Davis P."/>
            <person name="Feltwell T."/>
            <person name="Fraser A."/>
            <person name="Gentles S."/>
            <person name="Goble A."/>
            <person name="Hamlin N."/>
            <person name="Harris D.E."/>
            <person name="Hidalgo J."/>
            <person name="Hodgson G."/>
            <person name="Holroyd S."/>
            <person name="Hornsby T."/>
            <person name="Howarth S."/>
            <person name="Huckle E.J."/>
            <person name="Hunt S."/>
            <person name="Jagels K."/>
            <person name="James K.D."/>
            <person name="Jones L."/>
            <person name="Jones M."/>
            <person name="Leather S."/>
            <person name="McDonald S."/>
            <person name="McLean J."/>
            <person name="Mooney P."/>
            <person name="Moule S."/>
            <person name="Mungall K.L."/>
            <person name="Murphy L.D."/>
            <person name="Niblett D."/>
            <person name="Odell C."/>
            <person name="Oliver K."/>
            <person name="O'Neil S."/>
            <person name="Pearson D."/>
            <person name="Quail M.A."/>
            <person name="Rabbinowitsch E."/>
            <person name="Rutherford K.M."/>
            <person name="Rutter S."/>
            <person name="Saunders D."/>
            <person name="Seeger K."/>
            <person name="Sharp S."/>
            <person name="Skelton J."/>
            <person name="Simmonds M.N."/>
            <person name="Squares R."/>
            <person name="Squares S."/>
            <person name="Stevens K."/>
            <person name="Taylor K."/>
            <person name="Taylor R.G."/>
            <person name="Tivey A."/>
            <person name="Walsh S.V."/>
            <person name="Warren T."/>
            <person name="Whitehead S."/>
            <person name="Woodward J.R."/>
            <person name="Volckaert G."/>
            <person name="Aert R."/>
            <person name="Robben J."/>
            <person name="Grymonprez B."/>
            <person name="Weltjens I."/>
            <person name="Vanstreels E."/>
            <person name="Rieger M."/>
            <person name="Schaefer M."/>
            <person name="Mueller-Auer S."/>
            <person name="Gabel C."/>
            <person name="Fuchs M."/>
            <person name="Duesterhoeft A."/>
            <person name="Fritzc C."/>
            <person name="Holzer E."/>
            <person name="Moestl D."/>
            <person name="Hilbert H."/>
            <person name="Borzym K."/>
            <person name="Langer I."/>
            <person name="Beck A."/>
            <person name="Lehrach H."/>
            <person name="Reinhardt R."/>
            <person name="Pohl T.M."/>
            <person name="Eger P."/>
            <person name="Zimmermann W."/>
            <person name="Wedler H."/>
            <person name="Wambutt R."/>
            <person name="Purnelle B."/>
            <person name="Goffeau A."/>
            <person name="Cadieu E."/>
            <person name="Dreano S."/>
            <person name="Gloux S."/>
            <person name="Lelaure V."/>
            <person name="Mottier S."/>
            <person name="Galibert F."/>
            <person name="Aves S.J."/>
            <person name="Xiang Z."/>
            <person name="Hunt C."/>
            <person name="Moore K."/>
            <person name="Hurst S.M."/>
            <person name="Lucas M."/>
            <person name="Rochet M."/>
            <person name="Gaillardin C."/>
            <person name="Tallada V.A."/>
            <person name="Garzon A."/>
            <person name="Thode G."/>
            <person name="Daga R.R."/>
            <person name="Cruzado L."/>
            <person name="Jimenez J."/>
            <person name="Sanchez M."/>
            <person name="del Rey F."/>
            <person name="Benito J."/>
            <person name="Dominguez A."/>
            <person name="Revuelta J.L."/>
            <person name="Moreno S."/>
            <person name="Armstrong J."/>
            <person name="Forsburg S.L."/>
            <person name="Cerutti L."/>
            <person name="Lowe T."/>
            <person name="McCombie W.R."/>
            <person name="Paulsen I."/>
            <person name="Potashkin J."/>
            <person name="Shpakovski G.V."/>
            <person name="Ussery D."/>
            <person name="Barrell B.G."/>
            <person name="Nurse P."/>
        </authorList>
    </citation>
    <scope>NUCLEOTIDE SEQUENCE [LARGE SCALE GENOMIC DNA]</scope>
    <source>
        <strain>972 / ATCC 24843</strain>
    </source>
</reference>
<proteinExistence type="inferred from homology"/>
<evidence type="ECO:0000250" key="1">
    <source>
        <dbReference type="UniProtKB" id="P07902"/>
    </source>
</evidence>
<evidence type="ECO:0000250" key="2">
    <source>
        <dbReference type="UniProtKB" id="P09148"/>
    </source>
</evidence>
<evidence type="ECO:0000255" key="3">
    <source>
        <dbReference type="PROSITE-ProRule" id="PRU10033"/>
    </source>
</evidence>
<evidence type="ECO:0000305" key="4"/>
<keyword id="KW-0119">Carbohydrate metabolism</keyword>
<keyword id="KW-0299">Galactose metabolism</keyword>
<keyword id="KW-0408">Iron</keyword>
<keyword id="KW-0479">Metal-binding</keyword>
<keyword id="KW-0548">Nucleotidyltransferase</keyword>
<keyword id="KW-1185">Reference proteome</keyword>
<keyword id="KW-0808">Transferase</keyword>
<keyword id="KW-0862">Zinc</keyword>
<gene>
    <name type="primary">gal7</name>
    <name type="ORF">SPBPB2B2.10c</name>
</gene>
<feature type="chain" id="PRO_0000169891" description="Galactose-1-phosphate uridylyltransferase">
    <location>
        <begin position="1"/>
        <end position="369"/>
    </location>
</feature>
<feature type="active site" description="Tele-UMP-histidine intermediate" evidence="3">
    <location>
        <position position="185"/>
    </location>
</feature>
<feature type="binding site" evidence="3">
    <location>
        <position position="54"/>
    </location>
    <ligand>
        <name>Zn(2+)</name>
        <dbReference type="ChEBI" id="CHEBI:29105"/>
    </ligand>
</feature>
<feature type="binding site" evidence="3">
    <location>
        <position position="57"/>
    </location>
    <ligand>
        <name>Zn(2+)</name>
        <dbReference type="ChEBI" id="CHEBI:29105"/>
    </ligand>
</feature>
<feature type="binding site" description="in other chain" evidence="1">
    <location>
        <position position="63"/>
    </location>
    <ligand>
        <name>UDP-alpha-D-glucose</name>
        <dbReference type="ChEBI" id="CHEBI:58885"/>
        <note>ligand shared between dimeric partners</note>
    </ligand>
</feature>
<feature type="binding site" description="in other chain" evidence="1">
    <location>
        <begin position="79"/>
        <end position="80"/>
    </location>
    <ligand>
        <name>UDP-alpha-D-glucose</name>
        <dbReference type="ChEBI" id="CHEBI:58885"/>
        <note>ligand shared between dimeric partners</note>
    </ligand>
</feature>
<feature type="binding site" evidence="3">
    <location>
        <position position="127"/>
    </location>
    <ligand>
        <name>Zn(2+)</name>
        <dbReference type="ChEBI" id="CHEBI:29105"/>
    </ligand>
</feature>
<feature type="binding site" evidence="1">
    <location>
        <position position="172"/>
    </location>
    <ligand>
        <name>UDP-alpha-D-glucose</name>
        <dbReference type="ChEBI" id="CHEBI:58885"/>
        <note>ligand shared between dimeric partners</note>
    </ligand>
</feature>
<feature type="binding site" evidence="3">
    <location>
        <position position="183"/>
    </location>
    <ligand>
        <name>Zn(2+)</name>
        <dbReference type="ChEBI" id="CHEBI:29105"/>
    </ligand>
</feature>
<feature type="binding site" description="in other chain" evidence="1">
    <location>
        <position position="187"/>
    </location>
    <ligand>
        <name>UDP-alpha-D-glucose</name>
        <dbReference type="ChEBI" id="CHEBI:58885"/>
        <note>ligand shared between dimeric partners</note>
    </ligand>
</feature>
<feature type="binding site" evidence="2">
    <location>
        <position position="201"/>
    </location>
    <ligand>
        <name>Fe cation</name>
        <dbReference type="ChEBI" id="CHEBI:24875"/>
    </ligand>
</feature>
<feature type="binding site" evidence="2">
    <location>
        <position position="300"/>
    </location>
    <ligand>
        <name>Fe cation</name>
        <dbReference type="ChEBI" id="CHEBI:24875"/>
    </ligand>
</feature>
<feature type="binding site" evidence="2">
    <location>
        <position position="317"/>
    </location>
    <ligand>
        <name>Fe cation</name>
        <dbReference type="ChEBI" id="CHEBI:24875"/>
    </ligand>
</feature>
<feature type="binding site" evidence="2">
    <location>
        <position position="319"/>
    </location>
    <ligand>
        <name>Fe cation</name>
        <dbReference type="ChEBI" id="CHEBI:24875"/>
    </ligand>
</feature>
<feature type="binding site" description="in other chain" evidence="1">
    <location>
        <begin position="332"/>
        <end position="335"/>
    </location>
    <ligand>
        <name>UDP-alpha-D-glucose</name>
        <dbReference type="ChEBI" id="CHEBI:58885"/>
        <note>ligand shared between dimeric partners</note>
    </ligand>
</feature>
<feature type="binding site" description="in other chain" evidence="1">
    <location>
        <begin position="337"/>
        <end position="338"/>
    </location>
    <ligand>
        <name>UDP-alpha-D-glucose</name>
        <dbReference type="ChEBI" id="CHEBI:58885"/>
        <note>ligand shared between dimeric partners</note>
    </ligand>
</feature>
<dbReference type="EC" id="2.7.7.12" evidence="2"/>
<dbReference type="EMBL" id="CU329671">
    <property type="protein sequence ID" value="CAC21412.1"/>
    <property type="molecule type" value="Genomic_DNA"/>
</dbReference>
<dbReference type="RefSeq" id="NP_596856.1">
    <property type="nucleotide sequence ID" value="NM_001023879.2"/>
</dbReference>
<dbReference type="SMR" id="Q9HDU5"/>
<dbReference type="BioGRID" id="277915">
    <property type="interactions" value="1"/>
</dbReference>
<dbReference type="FunCoup" id="Q9HDU5">
    <property type="interactions" value="327"/>
</dbReference>
<dbReference type="STRING" id="284812.Q9HDU5"/>
<dbReference type="iPTMnet" id="Q9HDU5"/>
<dbReference type="PaxDb" id="4896-SPBPB2B2.10c.1"/>
<dbReference type="EnsemblFungi" id="SPBPB2B2.10c.1">
    <property type="protein sequence ID" value="SPBPB2B2.10c.1:pep"/>
    <property type="gene ID" value="SPBPB2B2.10c"/>
</dbReference>
<dbReference type="GeneID" id="2541407"/>
<dbReference type="KEGG" id="spo:2541407"/>
<dbReference type="PomBase" id="SPBPB2B2.10c">
    <property type="gene designation" value="gal7"/>
</dbReference>
<dbReference type="VEuPathDB" id="FungiDB:SPBPB2B2.10c"/>
<dbReference type="eggNOG" id="KOG2958">
    <property type="taxonomic scope" value="Eukaryota"/>
</dbReference>
<dbReference type="HOGENOM" id="CLU_029960_0_0_1"/>
<dbReference type="InParanoid" id="Q9HDU5"/>
<dbReference type="OMA" id="CFENRGA"/>
<dbReference type="PhylomeDB" id="Q9HDU5"/>
<dbReference type="UniPathway" id="UPA00214"/>
<dbReference type="PRO" id="PR:Q9HDU5"/>
<dbReference type="Proteomes" id="UP000002485">
    <property type="component" value="Chromosome II"/>
</dbReference>
<dbReference type="GO" id="GO:0005737">
    <property type="term" value="C:cytoplasm"/>
    <property type="evidence" value="ECO:0000318"/>
    <property type="project" value="GO_Central"/>
</dbReference>
<dbReference type="GO" id="GO:0005829">
    <property type="term" value="C:cytosol"/>
    <property type="evidence" value="ECO:0007005"/>
    <property type="project" value="PomBase"/>
</dbReference>
<dbReference type="GO" id="GO:0005634">
    <property type="term" value="C:nucleus"/>
    <property type="evidence" value="ECO:0007005"/>
    <property type="project" value="PomBase"/>
</dbReference>
<dbReference type="GO" id="GO:0008108">
    <property type="term" value="F:UDP-glucose:hexose-1-phosphate uridylyltransferase activity"/>
    <property type="evidence" value="ECO:0000315"/>
    <property type="project" value="PomBase"/>
</dbReference>
<dbReference type="GO" id="GO:0008270">
    <property type="term" value="F:zinc ion binding"/>
    <property type="evidence" value="ECO:0007669"/>
    <property type="project" value="InterPro"/>
</dbReference>
<dbReference type="GO" id="GO:0006012">
    <property type="term" value="P:galactose metabolic process"/>
    <property type="evidence" value="ECO:0007669"/>
    <property type="project" value="UniProtKB-UniPathway"/>
</dbReference>
<dbReference type="GO" id="GO:0052574">
    <property type="term" value="P:UDP-galactose biosynthetic process"/>
    <property type="evidence" value="ECO:0000315"/>
    <property type="project" value="PomBase"/>
</dbReference>
<dbReference type="CDD" id="cd00608">
    <property type="entry name" value="GalT"/>
    <property type="match status" value="1"/>
</dbReference>
<dbReference type="FunFam" id="3.30.428.10:FF:000001">
    <property type="entry name" value="Galactose-1-phosphate uridylyltransferase"/>
    <property type="match status" value="1"/>
</dbReference>
<dbReference type="Gene3D" id="3.30.428.10">
    <property type="entry name" value="HIT-like"/>
    <property type="match status" value="2"/>
</dbReference>
<dbReference type="InterPro" id="IPR001937">
    <property type="entry name" value="GalP_UDPtransf1"/>
</dbReference>
<dbReference type="InterPro" id="IPR019779">
    <property type="entry name" value="GalP_UDPtransf1_His-AS"/>
</dbReference>
<dbReference type="InterPro" id="IPR005850">
    <property type="entry name" value="GalP_Utransf_C"/>
</dbReference>
<dbReference type="InterPro" id="IPR005849">
    <property type="entry name" value="GalP_Utransf_N"/>
</dbReference>
<dbReference type="InterPro" id="IPR036265">
    <property type="entry name" value="HIT-like_sf"/>
</dbReference>
<dbReference type="NCBIfam" id="TIGR00209">
    <property type="entry name" value="galT_1"/>
    <property type="match status" value="1"/>
</dbReference>
<dbReference type="NCBIfam" id="NF008724">
    <property type="entry name" value="PRK11720.1"/>
    <property type="match status" value="1"/>
</dbReference>
<dbReference type="PANTHER" id="PTHR11943">
    <property type="entry name" value="GALACTOSE-1-PHOSPHATE URIDYLYLTRANSFERASE"/>
    <property type="match status" value="1"/>
</dbReference>
<dbReference type="PANTHER" id="PTHR11943:SF1">
    <property type="entry name" value="GALACTOSE-1-PHOSPHATE URIDYLYLTRANSFERASE"/>
    <property type="match status" value="1"/>
</dbReference>
<dbReference type="Pfam" id="PF02744">
    <property type="entry name" value="GalP_UDP_tr_C"/>
    <property type="match status" value="1"/>
</dbReference>
<dbReference type="Pfam" id="PF01087">
    <property type="entry name" value="GalP_UDP_transf"/>
    <property type="match status" value="1"/>
</dbReference>
<dbReference type="PIRSF" id="PIRSF000808">
    <property type="entry name" value="GalT"/>
    <property type="match status" value="1"/>
</dbReference>
<dbReference type="SUPFAM" id="SSF54197">
    <property type="entry name" value="HIT-like"/>
    <property type="match status" value="2"/>
</dbReference>
<dbReference type="PROSITE" id="PS00117">
    <property type="entry name" value="GAL_P_UDP_TRANSF_I"/>
    <property type="match status" value="1"/>
</dbReference>
<protein>
    <recommendedName>
        <fullName>Galactose-1-phosphate uridylyltransferase</fullName>
        <shortName>Gal-1-P uridylyltransferase</shortName>
        <ecNumber evidence="2">2.7.7.12</ecNumber>
    </recommendedName>
    <alternativeName>
        <fullName>UDP-glucose--hexose-1-phosphate uridylyltransferase</fullName>
    </alternativeName>
</protein>
<comment type="catalytic activity">
    <reaction evidence="2">
        <text>alpha-D-galactose 1-phosphate + UDP-alpha-D-glucose = alpha-D-glucose 1-phosphate + UDP-alpha-D-galactose</text>
        <dbReference type="Rhea" id="RHEA:13989"/>
        <dbReference type="ChEBI" id="CHEBI:58336"/>
        <dbReference type="ChEBI" id="CHEBI:58601"/>
        <dbReference type="ChEBI" id="CHEBI:58885"/>
        <dbReference type="ChEBI" id="CHEBI:66914"/>
        <dbReference type="EC" id="2.7.7.12"/>
    </reaction>
</comment>
<comment type="cofactor">
    <cofactor evidence="2">
        <name>Zn(2+)</name>
        <dbReference type="ChEBI" id="CHEBI:29105"/>
    </cofactor>
    <text evidence="2">Binds 1 zinc ion per subunit. Zinc binding seems to play a structural role.</text>
</comment>
<comment type="pathway">
    <text>Carbohydrate metabolism; galactose metabolism.</text>
</comment>
<comment type="subunit">
    <text evidence="1">Homodimer.</text>
</comment>
<comment type="similarity">
    <text evidence="4">Belongs to the galactose-1-phosphate uridylyltransferase type 1 family.</text>
</comment>
<sequence>MTSKKFDFTEYSHRRYNPLTDSYVLCSPHRAKRPWQGAKEEIKKDDTVKYDPTCYLCPGNIRATGFENPKYETTYVFPNDYPAVRVDQPDYMQDESEITKGNTLKTRMFKTEGVKGKCFVICFCPNHNLTLPLMSAEAICNVVETWKHLYVTLKKESLEGPIRYKYLQIFENKGSAMGCSNPHPHGQAWCLDVIPSVVAQEMCNMTKYFELNNSHLLGDYVKLEMLEKERIVVENDSFIVVVPYWALWPFETLLIAKEHLKSLEEFEEKQKVDLASALKMLTTKYDNLFNTSFPYSMGLHQAPLYGSNEEVENSWFHMHFYPPLLRSATVKKFCVGFEMLGEPQRDLTSEQAAARLQELDGQKHYKNLL</sequence>